<keyword id="KW-0414">Isoprene biosynthesis</keyword>
<keyword id="KW-0456">Lyase</keyword>
<keyword id="KW-0479">Metal-binding</keyword>
<keyword id="KW-0511">Multifunctional enzyme</keyword>
<keyword id="KW-0548">Nucleotidyltransferase</keyword>
<keyword id="KW-0808">Transferase</keyword>
<accession>Q8YHD8</accession>
<sequence length="390" mass="41840">MAAGRGERAGQSAEGPKQYRLIGAEAVLARTLRAFTDCPLIGTIAVVIHPDDHALYRRAVPEKHENVILVTGGPTRQESTRLGLLALKDEAPQYVLIHDGVRPFIGQDLLERIIANLTPDNGVLPALAVSDTLKRAAADGMVETTISRTGLFAAQTPQAFPYAPILDAHEKAFAINRTDFTDDAAIAEWQEIAVRIIEGSADNTKLTWAKDIEMADKRLRQDHAVFPDIRTGNGYDVHSFEPGDHVTLCGVKIPHEAKLNGHSDADVALHALTDALLATRGAGDIGTHFPPSDPQWKGAASRIFIEHAAKIVREAGGRIANVDVTLISEAPKIGPHRAAMTQALCDMLGIAADRVSIKATTNEKLGFVGRREGIAAIATATVIYPGEVPE</sequence>
<evidence type="ECO:0000255" key="1">
    <source>
        <dbReference type="HAMAP-Rule" id="MF_01520"/>
    </source>
</evidence>
<dbReference type="EC" id="2.7.7.60" evidence="1"/>
<dbReference type="EC" id="4.6.1.12" evidence="1"/>
<dbReference type="EMBL" id="AE008917">
    <property type="protein sequence ID" value="AAL52044.1"/>
    <property type="molecule type" value="Genomic_DNA"/>
</dbReference>
<dbReference type="PIR" id="AI3359">
    <property type="entry name" value="AI3359"/>
</dbReference>
<dbReference type="SMR" id="Q8YHD8"/>
<dbReference type="KEGG" id="bme:BMEI0863"/>
<dbReference type="eggNOG" id="COG0245">
    <property type="taxonomic scope" value="Bacteria"/>
</dbReference>
<dbReference type="eggNOG" id="COG1211">
    <property type="taxonomic scope" value="Bacteria"/>
</dbReference>
<dbReference type="UniPathway" id="UPA00056">
    <property type="reaction ID" value="UER00093"/>
</dbReference>
<dbReference type="UniPathway" id="UPA00056">
    <property type="reaction ID" value="UER00095"/>
</dbReference>
<dbReference type="Proteomes" id="UP000000419">
    <property type="component" value="Chromosome I"/>
</dbReference>
<dbReference type="GO" id="GO:0008685">
    <property type="term" value="F:2-C-methyl-D-erythritol 2,4-cyclodiphosphate synthase activity"/>
    <property type="evidence" value="ECO:0007669"/>
    <property type="project" value="UniProtKB-UniRule"/>
</dbReference>
<dbReference type="GO" id="GO:0050518">
    <property type="term" value="F:2-C-methyl-D-erythritol 4-phosphate cytidylyltransferase activity"/>
    <property type="evidence" value="ECO:0007669"/>
    <property type="project" value="UniProtKB-UniRule"/>
</dbReference>
<dbReference type="GO" id="GO:0046872">
    <property type="term" value="F:metal ion binding"/>
    <property type="evidence" value="ECO:0007669"/>
    <property type="project" value="UniProtKB-KW"/>
</dbReference>
<dbReference type="GO" id="GO:0019288">
    <property type="term" value="P:isopentenyl diphosphate biosynthetic process, methylerythritol 4-phosphate pathway"/>
    <property type="evidence" value="ECO:0007669"/>
    <property type="project" value="UniProtKB-UniRule"/>
</dbReference>
<dbReference type="GO" id="GO:0016114">
    <property type="term" value="P:terpenoid biosynthetic process"/>
    <property type="evidence" value="ECO:0007669"/>
    <property type="project" value="InterPro"/>
</dbReference>
<dbReference type="CDD" id="cd02516">
    <property type="entry name" value="CDP-ME_synthetase"/>
    <property type="match status" value="1"/>
</dbReference>
<dbReference type="CDD" id="cd00554">
    <property type="entry name" value="MECDP_synthase"/>
    <property type="match status" value="1"/>
</dbReference>
<dbReference type="FunFam" id="3.30.1330.50:FF:000003">
    <property type="entry name" value="2-C-methyl-D-erythritol 2,4-cyclodiphosphate synthase"/>
    <property type="match status" value="1"/>
</dbReference>
<dbReference type="FunFam" id="3.90.550.10:FF:000003">
    <property type="entry name" value="2-C-methyl-D-erythritol 4-phosphate cytidylyltransferase"/>
    <property type="match status" value="1"/>
</dbReference>
<dbReference type="Gene3D" id="3.30.1330.50">
    <property type="entry name" value="2-C-methyl-D-erythritol 2,4-cyclodiphosphate synthase"/>
    <property type="match status" value="1"/>
</dbReference>
<dbReference type="Gene3D" id="3.90.550.10">
    <property type="entry name" value="Spore Coat Polysaccharide Biosynthesis Protein SpsA, Chain A"/>
    <property type="match status" value="1"/>
</dbReference>
<dbReference type="HAMAP" id="MF_01520">
    <property type="entry name" value="IspDF"/>
    <property type="match status" value="1"/>
</dbReference>
<dbReference type="HAMAP" id="MF_00107">
    <property type="entry name" value="IspF"/>
    <property type="match status" value="1"/>
</dbReference>
<dbReference type="InterPro" id="IPR001228">
    <property type="entry name" value="IspD"/>
</dbReference>
<dbReference type="InterPro" id="IPR026596">
    <property type="entry name" value="IspD/F"/>
</dbReference>
<dbReference type="InterPro" id="IPR034683">
    <property type="entry name" value="IspD/TarI"/>
</dbReference>
<dbReference type="InterPro" id="IPR018294">
    <property type="entry name" value="ISPD_synthase_CS"/>
</dbReference>
<dbReference type="InterPro" id="IPR003526">
    <property type="entry name" value="MECDP_synthase"/>
</dbReference>
<dbReference type="InterPro" id="IPR020555">
    <property type="entry name" value="MECDP_synthase_CS"/>
</dbReference>
<dbReference type="InterPro" id="IPR036571">
    <property type="entry name" value="MECDP_synthase_sf"/>
</dbReference>
<dbReference type="InterPro" id="IPR029044">
    <property type="entry name" value="Nucleotide-diphossugar_trans"/>
</dbReference>
<dbReference type="NCBIfam" id="TIGR00453">
    <property type="entry name" value="ispD"/>
    <property type="match status" value="1"/>
</dbReference>
<dbReference type="NCBIfam" id="TIGR00151">
    <property type="entry name" value="ispF"/>
    <property type="match status" value="1"/>
</dbReference>
<dbReference type="NCBIfam" id="NF006899">
    <property type="entry name" value="PRK09382.1"/>
    <property type="match status" value="1"/>
</dbReference>
<dbReference type="PANTHER" id="PTHR43181">
    <property type="entry name" value="2-C-METHYL-D-ERYTHRITOL 2,4-CYCLODIPHOSPHATE SYNTHASE, CHLOROPLASTIC"/>
    <property type="match status" value="1"/>
</dbReference>
<dbReference type="PANTHER" id="PTHR43181:SF1">
    <property type="entry name" value="2-C-METHYL-D-ERYTHRITOL 2,4-CYCLODIPHOSPHATE SYNTHASE, CHLOROPLASTIC"/>
    <property type="match status" value="1"/>
</dbReference>
<dbReference type="Pfam" id="PF01128">
    <property type="entry name" value="IspD"/>
    <property type="match status" value="1"/>
</dbReference>
<dbReference type="Pfam" id="PF02542">
    <property type="entry name" value="YgbB"/>
    <property type="match status" value="1"/>
</dbReference>
<dbReference type="SUPFAM" id="SSF69765">
    <property type="entry name" value="IpsF-like"/>
    <property type="match status" value="1"/>
</dbReference>
<dbReference type="SUPFAM" id="SSF53448">
    <property type="entry name" value="Nucleotide-diphospho-sugar transferases"/>
    <property type="match status" value="1"/>
</dbReference>
<dbReference type="PROSITE" id="PS01295">
    <property type="entry name" value="ISPD"/>
    <property type="match status" value="1"/>
</dbReference>
<dbReference type="PROSITE" id="PS01350">
    <property type="entry name" value="ISPF"/>
    <property type="match status" value="1"/>
</dbReference>
<comment type="function">
    <text evidence="1">Bifunctional enzyme that catalyzes the formation of 4-diphosphocytidyl-2-C-methyl-D-erythritol from CTP and 2-C-methyl-D-erythritol 4-phosphate (MEP) (IspD), and catalyzes the conversion of 4-diphosphocytidyl-2-C-methyl-D-erythritol 2-phosphate (CDP-ME2P) to 2-C-methyl-D-erythritol 2,4-cyclodiphosphate (ME-CPP) with a corresponding release of cytidine 5-monophosphate (CMP) (IspF).</text>
</comment>
<comment type="catalytic activity">
    <reaction evidence="1">
        <text>2-C-methyl-D-erythritol 4-phosphate + CTP + H(+) = 4-CDP-2-C-methyl-D-erythritol + diphosphate</text>
        <dbReference type="Rhea" id="RHEA:13429"/>
        <dbReference type="ChEBI" id="CHEBI:15378"/>
        <dbReference type="ChEBI" id="CHEBI:33019"/>
        <dbReference type="ChEBI" id="CHEBI:37563"/>
        <dbReference type="ChEBI" id="CHEBI:57823"/>
        <dbReference type="ChEBI" id="CHEBI:58262"/>
        <dbReference type="EC" id="2.7.7.60"/>
    </reaction>
</comment>
<comment type="catalytic activity">
    <reaction evidence="1">
        <text>4-CDP-2-C-methyl-D-erythritol 2-phosphate = 2-C-methyl-D-erythritol 2,4-cyclic diphosphate + CMP</text>
        <dbReference type="Rhea" id="RHEA:23864"/>
        <dbReference type="ChEBI" id="CHEBI:57919"/>
        <dbReference type="ChEBI" id="CHEBI:58483"/>
        <dbReference type="ChEBI" id="CHEBI:60377"/>
        <dbReference type="EC" id="4.6.1.12"/>
    </reaction>
</comment>
<comment type="cofactor">
    <cofactor evidence="1">
        <name>a divalent metal cation</name>
        <dbReference type="ChEBI" id="CHEBI:60240"/>
    </cofactor>
</comment>
<comment type="pathway">
    <text evidence="1">Isoprenoid biosynthesis; isopentenyl diphosphate biosynthesis via DXP pathway; isopentenyl diphosphate from 1-deoxy-D-xylulose 5-phosphate: step 2/6.</text>
</comment>
<comment type="pathway">
    <text evidence="1">Isoprenoid biosynthesis; isopentenyl diphosphate biosynthesis via DXP pathway; isopentenyl diphosphate from 1-deoxy-D-xylulose 5-phosphate: step 4/6.</text>
</comment>
<comment type="similarity">
    <text evidence="1">In the N-terminal section; belongs to the IspD/TarI cytidylyltransferase family. IspD subfamily.</text>
</comment>
<comment type="similarity">
    <text evidence="1">In the C-terminal section; belongs to the IspF family.</text>
</comment>
<organism>
    <name type="scientific">Brucella melitensis biotype 1 (strain ATCC 23456 / CCUG 17765 / NCTC 10094 / 16M)</name>
    <dbReference type="NCBI Taxonomy" id="224914"/>
    <lineage>
        <taxon>Bacteria</taxon>
        <taxon>Pseudomonadati</taxon>
        <taxon>Pseudomonadota</taxon>
        <taxon>Alphaproteobacteria</taxon>
        <taxon>Hyphomicrobiales</taxon>
        <taxon>Brucellaceae</taxon>
        <taxon>Brucella/Ochrobactrum group</taxon>
        <taxon>Brucella</taxon>
    </lineage>
</organism>
<reference key="1">
    <citation type="journal article" date="2002" name="Proc. Natl. Acad. Sci. U.S.A.">
        <title>The genome sequence of the facultative intracellular pathogen Brucella melitensis.</title>
        <authorList>
            <person name="DelVecchio V.G."/>
            <person name="Kapatral V."/>
            <person name="Redkar R.J."/>
            <person name="Patra G."/>
            <person name="Mujer C."/>
            <person name="Los T."/>
            <person name="Ivanova N."/>
            <person name="Anderson I."/>
            <person name="Bhattacharyya A."/>
            <person name="Lykidis A."/>
            <person name="Reznik G."/>
            <person name="Jablonski L."/>
            <person name="Larsen N."/>
            <person name="D'Souza M."/>
            <person name="Bernal A."/>
            <person name="Mazur M."/>
            <person name="Goltsman E."/>
            <person name="Selkov E."/>
            <person name="Elzer P.H."/>
            <person name="Hagius S."/>
            <person name="O'Callaghan D."/>
            <person name="Letesson J.-J."/>
            <person name="Haselkorn R."/>
            <person name="Kyrpides N.C."/>
            <person name="Overbeek R."/>
        </authorList>
    </citation>
    <scope>NUCLEOTIDE SEQUENCE [LARGE SCALE GENOMIC DNA]</scope>
    <source>
        <strain>ATCC 23456 / CCUG 17765 / NCTC 10094 / 16M</strain>
    </source>
</reference>
<name>ISPDF_BRUME</name>
<protein>
    <recommendedName>
        <fullName evidence="1">Bifunctional enzyme IspD/IspF</fullName>
    </recommendedName>
    <domain>
        <recommendedName>
            <fullName evidence="1">2-C-methyl-D-erythritol 4-phosphate cytidylyltransferase</fullName>
            <ecNumber evidence="1">2.7.7.60</ecNumber>
        </recommendedName>
        <alternativeName>
            <fullName evidence="1">4-diphosphocytidyl-2C-methyl-D-erythritol synthase</fullName>
        </alternativeName>
        <alternativeName>
            <fullName evidence="1">MEP cytidylyltransferase</fullName>
            <shortName evidence="1">MCT</shortName>
        </alternativeName>
    </domain>
    <domain>
        <recommendedName>
            <fullName evidence="1">2-C-methyl-D-erythritol 2,4-cyclodiphosphate synthase</fullName>
            <shortName evidence="1">MECDP-synthase</shortName>
            <shortName evidence="1">MECPP-synthase</shortName>
            <shortName evidence="1">MECPS</shortName>
            <ecNumber evidence="1">4.6.1.12</ecNumber>
        </recommendedName>
    </domain>
</protein>
<feature type="chain" id="PRO_0000075660" description="Bifunctional enzyme IspD/IspF">
    <location>
        <begin position="1"/>
        <end position="390"/>
    </location>
</feature>
<feature type="region of interest" description="2-C-methyl-D-erythritol 4-phosphate cytidylyltransferase" evidence="1">
    <location>
        <begin position="1"/>
        <end position="229"/>
    </location>
</feature>
<feature type="region of interest" description="2-C-methyl-D-erythritol 2,4-cyclodiphosphate synthase" evidence="1">
    <location>
        <begin position="230"/>
        <end position="390"/>
    </location>
</feature>
<feature type="binding site" evidence="1">
    <location>
        <begin position="236"/>
        <end position="238"/>
    </location>
    <ligand>
        <name>4-CDP-2-C-methyl-D-erythritol 2-phosphate</name>
        <dbReference type="ChEBI" id="CHEBI:57919"/>
    </ligand>
</feature>
<feature type="binding site" evidence="1">
    <location>
        <position position="236"/>
    </location>
    <ligand>
        <name>a divalent metal cation</name>
        <dbReference type="ChEBI" id="CHEBI:60240"/>
    </ligand>
</feature>
<feature type="binding site" evidence="1">
    <location>
        <position position="238"/>
    </location>
    <ligand>
        <name>a divalent metal cation</name>
        <dbReference type="ChEBI" id="CHEBI:60240"/>
    </ligand>
</feature>
<feature type="binding site" evidence="1">
    <location>
        <begin position="262"/>
        <end position="263"/>
    </location>
    <ligand>
        <name>4-CDP-2-C-methyl-D-erythritol 2-phosphate</name>
        <dbReference type="ChEBI" id="CHEBI:57919"/>
    </ligand>
</feature>
<feature type="binding site" evidence="1">
    <location>
        <position position="270"/>
    </location>
    <ligand>
        <name>a divalent metal cation</name>
        <dbReference type="ChEBI" id="CHEBI:60240"/>
    </ligand>
</feature>
<feature type="binding site" evidence="1">
    <location>
        <begin position="284"/>
        <end position="286"/>
    </location>
    <ligand>
        <name>4-CDP-2-C-methyl-D-erythritol 2-phosphate</name>
        <dbReference type="ChEBI" id="CHEBI:57919"/>
    </ligand>
</feature>
<feature type="binding site" evidence="1">
    <location>
        <begin position="360"/>
        <end position="363"/>
    </location>
    <ligand>
        <name>4-CDP-2-C-methyl-D-erythritol 2-phosphate</name>
        <dbReference type="ChEBI" id="CHEBI:57919"/>
    </ligand>
</feature>
<feature type="binding site" evidence="1">
    <location>
        <position position="367"/>
    </location>
    <ligand>
        <name>4-CDP-2-C-methyl-D-erythritol 2-phosphate</name>
        <dbReference type="ChEBI" id="CHEBI:57919"/>
    </ligand>
</feature>
<feature type="binding site" evidence="1">
    <location>
        <position position="370"/>
    </location>
    <ligand>
        <name>4-CDP-2-C-methyl-D-erythritol 2-phosphate</name>
        <dbReference type="ChEBI" id="CHEBI:57919"/>
    </ligand>
</feature>
<feature type="site" description="Transition state stabilizer" evidence="1">
    <location>
        <position position="8"/>
    </location>
</feature>
<feature type="site" description="Transition state stabilizer" evidence="1">
    <location>
        <position position="17"/>
    </location>
</feature>
<feature type="site" description="Positions MEP for the nucleophilic attack" evidence="1">
    <location>
        <position position="148"/>
    </location>
</feature>
<feature type="site" description="Positions MEP for the nucleophilic attack" evidence="1">
    <location>
        <position position="205"/>
    </location>
</feature>
<feature type="site" description="Transition state stabilizer" evidence="1">
    <location>
        <position position="262"/>
    </location>
</feature>
<feature type="site" description="Transition state stabilizer" evidence="1">
    <location>
        <position position="361"/>
    </location>
</feature>
<gene>
    <name evidence="1" type="primary">ispDF</name>
    <name type="ordered locus">BMEI0863</name>
</gene>
<proteinExistence type="inferred from homology"/>